<dbReference type="EMBL" id="BX640412">
    <property type="protein sequence ID" value="CAE44823.1"/>
    <property type="molecule type" value="Genomic_DNA"/>
</dbReference>
<dbReference type="RefSeq" id="NP_879347.1">
    <property type="nucleotide sequence ID" value="NC_002929.2"/>
</dbReference>
<dbReference type="STRING" id="257313.BP0494"/>
<dbReference type="PaxDb" id="257313-BP0494"/>
<dbReference type="KEGG" id="bpe:BP0494"/>
<dbReference type="PATRIC" id="fig|257313.5.peg.531"/>
<dbReference type="eggNOG" id="COG0759">
    <property type="taxonomic scope" value="Bacteria"/>
</dbReference>
<dbReference type="HOGENOM" id="CLU_144811_2_2_4"/>
<dbReference type="Proteomes" id="UP000002676">
    <property type="component" value="Chromosome"/>
</dbReference>
<dbReference type="GO" id="GO:0005886">
    <property type="term" value="C:plasma membrane"/>
    <property type="evidence" value="ECO:0007669"/>
    <property type="project" value="UniProtKB-SubCell"/>
</dbReference>
<dbReference type="HAMAP" id="MF_00386">
    <property type="entry name" value="UPF0161_YidD"/>
    <property type="match status" value="1"/>
</dbReference>
<dbReference type="InterPro" id="IPR002696">
    <property type="entry name" value="Membr_insert_effic_factor_YidD"/>
</dbReference>
<dbReference type="NCBIfam" id="TIGR00278">
    <property type="entry name" value="membrane protein insertion efficiency factor YidD"/>
    <property type="match status" value="1"/>
</dbReference>
<dbReference type="PANTHER" id="PTHR33383">
    <property type="entry name" value="MEMBRANE PROTEIN INSERTION EFFICIENCY FACTOR-RELATED"/>
    <property type="match status" value="1"/>
</dbReference>
<dbReference type="PANTHER" id="PTHR33383:SF1">
    <property type="entry name" value="MEMBRANE PROTEIN INSERTION EFFICIENCY FACTOR-RELATED"/>
    <property type="match status" value="1"/>
</dbReference>
<dbReference type="Pfam" id="PF01809">
    <property type="entry name" value="YidD"/>
    <property type="match status" value="1"/>
</dbReference>
<dbReference type="SMART" id="SM01234">
    <property type="entry name" value="Haemolytic"/>
    <property type="match status" value="1"/>
</dbReference>
<sequence>MIRRLLIAPIRFYRYFLSPWVGRQCRFTPTCSAYAIEAIERHGAWRGLWLAARRIGRCHPWSPGGYDPVPPGHGAGAQACCAHRHRTEPD</sequence>
<feature type="chain" id="PRO_0000171799" description="Putative membrane protein insertion efficiency factor">
    <location>
        <begin position="1"/>
        <end position="90"/>
    </location>
</feature>
<protein>
    <recommendedName>
        <fullName evidence="1">Putative membrane protein insertion efficiency factor</fullName>
    </recommendedName>
</protein>
<comment type="function">
    <text evidence="1">Could be involved in insertion of integral membrane proteins into the membrane.</text>
</comment>
<comment type="subcellular location">
    <subcellularLocation>
        <location evidence="1">Cell inner membrane</location>
        <topology evidence="1">Peripheral membrane protein</topology>
        <orientation evidence="1">Cytoplasmic side</orientation>
    </subcellularLocation>
</comment>
<comment type="similarity">
    <text evidence="1">Belongs to the UPF0161 family.</text>
</comment>
<name>YIDD_BORPE</name>
<reference key="1">
    <citation type="journal article" date="2003" name="Nat. Genet.">
        <title>Comparative analysis of the genome sequences of Bordetella pertussis, Bordetella parapertussis and Bordetella bronchiseptica.</title>
        <authorList>
            <person name="Parkhill J."/>
            <person name="Sebaihia M."/>
            <person name="Preston A."/>
            <person name="Murphy L.D."/>
            <person name="Thomson N.R."/>
            <person name="Harris D.E."/>
            <person name="Holden M.T.G."/>
            <person name="Churcher C.M."/>
            <person name="Bentley S.D."/>
            <person name="Mungall K.L."/>
            <person name="Cerdeno-Tarraga A.-M."/>
            <person name="Temple L."/>
            <person name="James K.D."/>
            <person name="Harris B."/>
            <person name="Quail M.A."/>
            <person name="Achtman M."/>
            <person name="Atkin R."/>
            <person name="Baker S."/>
            <person name="Basham D."/>
            <person name="Bason N."/>
            <person name="Cherevach I."/>
            <person name="Chillingworth T."/>
            <person name="Collins M."/>
            <person name="Cronin A."/>
            <person name="Davis P."/>
            <person name="Doggett J."/>
            <person name="Feltwell T."/>
            <person name="Goble A."/>
            <person name="Hamlin N."/>
            <person name="Hauser H."/>
            <person name="Holroyd S."/>
            <person name="Jagels K."/>
            <person name="Leather S."/>
            <person name="Moule S."/>
            <person name="Norberczak H."/>
            <person name="O'Neil S."/>
            <person name="Ormond D."/>
            <person name="Price C."/>
            <person name="Rabbinowitsch E."/>
            <person name="Rutter S."/>
            <person name="Sanders M."/>
            <person name="Saunders D."/>
            <person name="Seeger K."/>
            <person name="Sharp S."/>
            <person name="Simmonds M."/>
            <person name="Skelton J."/>
            <person name="Squares R."/>
            <person name="Squares S."/>
            <person name="Stevens K."/>
            <person name="Unwin L."/>
            <person name="Whitehead S."/>
            <person name="Barrell B.G."/>
            <person name="Maskell D.J."/>
        </authorList>
    </citation>
    <scope>NUCLEOTIDE SEQUENCE [LARGE SCALE GENOMIC DNA]</scope>
    <source>
        <strain>Tohama I / ATCC BAA-589 / NCTC 13251</strain>
    </source>
</reference>
<keyword id="KW-0997">Cell inner membrane</keyword>
<keyword id="KW-1003">Cell membrane</keyword>
<keyword id="KW-0472">Membrane</keyword>
<keyword id="KW-1185">Reference proteome</keyword>
<proteinExistence type="inferred from homology"/>
<gene>
    <name type="ordered locus">BP0494</name>
</gene>
<accession>Q7VSD7</accession>
<organism>
    <name type="scientific">Bordetella pertussis (strain Tohama I / ATCC BAA-589 / NCTC 13251)</name>
    <dbReference type="NCBI Taxonomy" id="257313"/>
    <lineage>
        <taxon>Bacteria</taxon>
        <taxon>Pseudomonadati</taxon>
        <taxon>Pseudomonadota</taxon>
        <taxon>Betaproteobacteria</taxon>
        <taxon>Burkholderiales</taxon>
        <taxon>Alcaligenaceae</taxon>
        <taxon>Bordetella</taxon>
    </lineage>
</organism>
<evidence type="ECO:0000255" key="1">
    <source>
        <dbReference type="HAMAP-Rule" id="MF_00386"/>
    </source>
</evidence>